<organism>
    <name type="scientific">Staphylococcus epidermidis (strain ATCC 35984 / DSM 28319 / BCRC 17069 / CCUG 31568 / BM 3577 / RP62A)</name>
    <dbReference type="NCBI Taxonomy" id="176279"/>
    <lineage>
        <taxon>Bacteria</taxon>
        <taxon>Bacillati</taxon>
        <taxon>Bacillota</taxon>
        <taxon>Bacilli</taxon>
        <taxon>Bacillales</taxon>
        <taxon>Staphylococcaceae</taxon>
        <taxon>Staphylococcus</taxon>
    </lineage>
</organism>
<evidence type="ECO:0000255" key="1">
    <source>
        <dbReference type="HAMAP-Rule" id="MF_01310"/>
    </source>
</evidence>
<evidence type="ECO:0000305" key="2"/>
<accession>Q5HM24</accession>
<reference key="1">
    <citation type="journal article" date="2005" name="J. Bacteriol.">
        <title>Insights on evolution of virulence and resistance from the complete genome analysis of an early methicillin-resistant Staphylococcus aureus strain and a biofilm-producing methicillin-resistant Staphylococcus epidermidis strain.</title>
        <authorList>
            <person name="Gill S.R."/>
            <person name="Fouts D.E."/>
            <person name="Archer G.L."/>
            <person name="Mongodin E.F."/>
            <person name="DeBoy R.T."/>
            <person name="Ravel J."/>
            <person name="Paulsen I.T."/>
            <person name="Kolonay J.F."/>
            <person name="Brinkac L.M."/>
            <person name="Beanan M.J."/>
            <person name="Dodson R.J."/>
            <person name="Daugherty S.C."/>
            <person name="Madupu R."/>
            <person name="Angiuoli S.V."/>
            <person name="Durkin A.S."/>
            <person name="Haft D.H."/>
            <person name="Vamathevan J.J."/>
            <person name="Khouri H."/>
            <person name="Utterback T.R."/>
            <person name="Lee C."/>
            <person name="Dimitrov G."/>
            <person name="Jiang L."/>
            <person name="Qin H."/>
            <person name="Weidman J."/>
            <person name="Tran K."/>
            <person name="Kang K.H."/>
            <person name="Hance I.R."/>
            <person name="Nelson K.E."/>
            <person name="Fraser C.M."/>
        </authorList>
    </citation>
    <scope>NUCLEOTIDE SEQUENCE [LARGE SCALE GENOMIC DNA]</scope>
    <source>
        <strain>ATCC 35984 / DSM 28319 / BCRC 17069 / CCUG 31568 / BM 3577 / RP62A</strain>
    </source>
</reference>
<sequence length="129" mass="13896">MARKQVSRKRRVKKNIENGVAHIRSTFNNTIVTITDEFGNALSWSSAGALGFKGSKKSTPFAAQMASETASKTAMEHGLKTVEVTVKGPGPGRESAIRALQSAGLEVTAIRDVTPVPHNGCRPPKRRRV</sequence>
<name>RS11_STAEQ</name>
<gene>
    <name evidence="1" type="primary">rpsK</name>
    <name type="ordered locus">SERP1806</name>
</gene>
<proteinExistence type="inferred from homology"/>
<dbReference type="EMBL" id="CP000029">
    <property type="protein sequence ID" value="AAW55122.1"/>
    <property type="molecule type" value="Genomic_DNA"/>
</dbReference>
<dbReference type="RefSeq" id="WP_001829725.1">
    <property type="nucleotide sequence ID" value="NC_002976.3"/>
</dbReference>
<dbReference type="SMR" id="Q5HM24"/>
<dbReference type="STRING" id="176279.SERP1806"/>
<dbReference type="GeneID" id="50018098"/>
<dbReference type="KEGG" id="ser:SERP1806"/>
<dbReference type="eggNOG" id="COG0100">
    <property type="taxonomic scope" value="Bacteria"/>
</dbReference>
<dbReference type="HOGENOM" id="CLU_072439_5_0_9"/>
<dbReference type="Proteomes" id="UP000000531">
    <property type="component" value="Chromosome"/>
</dbReference>
<dbReference type="GO" id="GO:1990904">
    <property type="term" value="C:ribonucleoprotein complex"/>
    <property type="evidence" value="ECO:0007669"/>
    <property type="project" value="UniProtKB-KW"/>
</dbReference>
<dbReference type="GO" id="GO:0005840">
    <property type="term" value="C:ribosome"/>
    <property type="evidence" value="ECO:0007669"/>
    <property type="project" value="UniProtKB-KW"/>
</dbReference>
<dbReference type="GO" id="GO:0019843">
    <property type="term" value="F:rRNA binding"/>
    <property type="evidence" value="ECO:0007669"/>
    <property type="project" value="UniProtKB-UniRule"/>
</dbReference>
<dbReference type="GO" id="GO:0003735">
    <property type="term" value="F:structural constituent of ribosome"/>
    <property type="evidence" value="ECO:0007669"/>
    <property type="project" value="InterPro"/>
</dbReference>
<dbReference type="GO" id="GO:0006412">
    <property type="term" value="P:translation"/>
    <property type="evidence" value="ECO:0007669"/>
    <property type="project" value="UniProtKB-UniRule"/>
</dbReference>
<dbReference type="FunFam" id="3.30.420.80:FF:000001">
    <property type="entry name" value="30S ribosomal protein S11"/>
    <property type="match status" value="1"/>
</dbReference>
<dbReference type="Gene3D" id="3.30.420.80">
    <property type="entry name" value="Ribosomal protein S11"/>
    <property type="match status" value="1"/>
</dbReference>
<dbReference type="HAMAP" id="MF_01310">
    <property type="entry name" value="Ribosomal_uS11"/>
    <property type="match status" value="1"/>
</dbReference>
<dbReference type="InterPro" id="IPR001971">
    <property type="entry name" value="Ribosomal_uS11"/>
</dbReference>
<dbReference type="InterPro" id="IPR019981">
    <property type="entry name" value="Ribosomal_uS11_bac-type"/>
</dbReference>
<dbReference type="InterPro" id="IPR018102">
    <property type="entry name" value="Ribosomal_uS11_CS"/>
</dbReference>
<dbReference type="InterPro" id="IPR036967">
    <property type="entry name" value="Ribosomal_uS11_sf"/>
</dbReference>
<dbReference type="NCBIfam" id="NF003698">
    <property type="entry name" value="PRK05309.1"/>
    <property type="match status" value="1"/>
</dbReference>
<dbReference type="NCBIfam" id="TIGR03632">
    <property type="entry name" value="uS11_bact"/>
    <property type="match status" value="1"/>
</dbReference>
<dbReference type="PANTHER" id="PTHR11759">
    <property type="entry name" value="40S RIBOSOMAL PROTEIN S14/30S RIBOSOMAL PROTEIN S11"/>
    <property type="match status" value="1"/>
</dbReference>
<dbReference type="Pfam" id="PF00411">
    <property type="entry name" value="Ribosomal_S11"/>
    <property type="match status" value="1"/>
</dbReference>
<dbReference type="PIRSF" id="PIRSF002131">
    <property type="entry name" value="Ribosomal_S11"/>
    <property type="match status" value="1"/>
</dbReference>
<dbReference type="SUPFAM" id="SSF53137">
    <property type="entry name" value="Translational machinery components"/>
    <property type="match status" value="1"/>
</dbReference>
<dbReference type="PROSITE" id="PS00054">
    <property type="entry name" value="RIBOSOMAL_S11"/>
    <property type="match status" value="1"/>
</dbReference>
<keyword id="KW-1185">Reference proteome</keyword>
<keyword id="KW-0687">Ribonucleoprotein</keyword>
<keyword id="KW-0689">Ribosomal protein</keyword>
<keyword id="KW-0694">RNA-binding</keyword>
<keyword id="KW-0699">rRNA-binding</keyword>
<feature type="chain" id="PRO_0000123225" description="Small ribosomal subunit protein uS11">
    <location>
        <begin position="1"/>
        <end position="129"/>
    </location>
</feature>
<comment type="function">
    <text evidence="1">Located on the platform of the 30S subunit, it bridges several disparate RNA helices of the 16S rRNA. Forms part of the Shine-Dalgarno cleft in the 70S ribosome.</text>
</comment>
<comment type="subunit">
    <text evidence="1">Part of the 30S ribosomal subunit. Interacts with proteins S7 and S18. Binds to IF-3.</text>
</comment>
<comment type="similarity">
    <text evidence="1">Belongs to the universal ribosomal protein uS11 family.</text>
</comment>
<protein>
    <recommendedName>
        <fullName evidence="1">Small ribosomal subunit protein uS11</fullName>
    </recommendedName>
    <alternativeName>
        <fullName evidence="2">30S ribosomal protein S11</fullName>
    </alternativeName>
</protein>